<organism>
    <name type="scientific">Bacillus cereus (strain ZK / E33L)</name>
    <dbReference type="NCBI Taxonomy" id="288681"/>
    <lineage>
        <taxon>Bacteria</taxon>
        <taxon>Bacillati</taxon>
        <taxon>Bacillota</taxon>
        <taxon>Bacilli</taxon>
        <taxon>Bacillales</taxon>
        <taxon>Bacillaceae</taxon>
        <taxon>Bacillus</taxon>
        <taxon>Bacillus cereus group</taxon>
    </lineage>
</organism>
<proteinExistence type="inferred from homology"/>
<reference key="1">
    <citation type="journal article" date="2006" name="J. Bacteriol.">
        <title>Pathogenomic sequence analysis of Bacillus cereus and Bacillus thuringiensis isolates closely related to Bacillus anthracis.</title>
        <authorList>
            <person name="Han C.S."/>
            <person name="Xie G."/>
            <person name="Challacombe J.F."/>
            <person name="Altherr M.R."/>
            <person name="Bhotika S.S."/>
            <person name="Bruce D."/>
            <person name="Campbell C.S."/>
            <person name="Campbell M.L."/>
            <person name="Chen J."/>
            <person name="Chertkov O."/>
            <person name="Cleland C."/>
            <person name="Dimitrijevic M."/>
            <person name="Doggett N.A."/>
            <person name="Fawcett J.J."/>
            <person name="Glavina T."/>
            <person name="Goodwin L.A."/>
            <person name="Hill K.K."/>
            <person name="Hitchcock P."/>
            <person name="Jackson P.J."/>
            <person name="Keim P."/>
            <person name="Kewalramani A.R."/>
            <person name="Longmire J."/>
            <person name="Lucas S."/>
            <person name="Malfatti S."/>
            <person name="McMurry K."/>
            <person name="Meincke L.J."/>
            <person name="Misra M."/>
            <person name="Moseman B.L."/>
            <person name="Mundt M."/>
            <person name="Munk A.C."/>
            <person name="Okinaka R.T."/>
            <person name="Parson-Quintana B."/>
            <person name="Reilly L.P."/>
            <person name="Richardson P."/>
            <person name="Robinson D.L."/>
            <person name="Rubin E."/>
            <person name="Saunders E."/>
            <person name="Tapia R."/>
            <person name="Tesmer J.G."/>
            <person name="Thayer N."/>
            <person name="Thompson L.S."/>
            <person name="Tice H."/>
            <person name="Ticknor L.O."/>
            <person name="Wills P.L."/>
            <person name="Brettin T.S."/>
            <person name="Gilna P."/>
        </authorList>
    </citation>
    <scope>NUCLEOTIDE SEQUENCE [LARGE SCALE GENOMIC DNA]</scope>
    <source>
        <strain>ZK / E33L</strain>
    </source>
</reference>
<name>TAL_BACCZ</name>
<comment type="function">
    <text evidence="1">Transaldolase is important for the balance of metabolites in the pentose-phosphate pathway.</text>
</comment>
<comment type="catalytic activity">
    <reaction evidence="1">
        <text>D-sedoheptulose 7-phosphate + D-glyceraldehyde 3-phosphate = D-erythrose 4-phosphate + beta-D-fructose 6-phosphate</text>
        <dbReference type="Rhea" id="RHEA:17053"/>
        <dbReference type="ChEBI" id="CHEBI:16897"/>
        <dbReference type="ChEBI" id="CHEBI:57483"/>
        <dbReference type="ChEBI" id="CHEBI:57634"/>
        <dbReference type="ChEBI" id="CHEBI:59776"/>
        <dbReference type="EC" id="2.2.1.2"/>
    </reaction>
</comment>
<comment type="pathway">
    <text evidence="1">Carbohydrate degradation; pentose phosphate pathway; D-glyceraldehyde 3-phosphate and beta-D-fructose 6-phosphate from D-ribose 5-phosphate and D-xylulose 5-phosphate (non-oxidative stage): step 2/3.</text>
</comment>
<comment type="subcellular location">
    <subcellularLocation>
        <location evidence="1">Cytoplasm</location>
    </subcellularLocation>
</comment>
<comment type="similarity">
    <text evidence="1">Belongs to the transaldolase family. Type 3B subfamily.</text>
</comment>
<feature type="chain" id="PRO_1000060457" description="Probable transaldolase">
    <location>
        <begin position="1"/>
        <end position="215"/>
    </location>
</feature>
<feature type="active site" description="Schiff-base intermediate with substrate" evidence="1">
    <location>
        <position position="83"/>
    </location>
</feature>
<accession>Q63FX6</accession>
<evidence type="ECO:0000255" key="1">
    <source>
        <dbReference type="HAMAP-Rule" id="MF_00494"/>
    </source>
</evidence>
<sequence length="215" mass="23069">MKFFIDTANINEIKEANALGVLAGVTTNPSLVAKEGVDFHERIREICNVVEGPVSAEVISLEADKMIEEGKELAKIAPNVVVKVPMTTEGLKAVKAFSDLGIRTNVTLVFSAVQALLAARAGATYVSPFLGRLDDIGHNGMDLIRQIAEIFAIHGIETEIIAASVRHSVHVTDAALNGAHIATIPANVIASLVKHPLTDQGIEKFLADWEKTQEK</sequence>
<dbReference type="EC" id="2.2.1.2" evidence="1"/>
<dbReference type="EMBL" id="CP000001">
    <property type="protein sequence ID" value="AAU19662.1"/>
    <property type="molecule type" value="Genomic_DNA"/>
</dbReference>
<dbReference type="SMR" id="Q63FX6"/>
<dbReference type="KEGG" id="bcz:BCE33L0580"/>
<dbReference type="PATRIC" id="fig|288681.22.peg.5012"/>
<dbReference type="UniPathway" id="UPA00115">
    <property type="reaction ID" value="UER00414"/>
</dbReference>
<dbReference type="Proteomes" id="UP000002612">
    <property type="component" value="Chromosome"/>
</dbReference>
<dbReference type="GO" id="GO:0005737">
    <property type="term" value="C:cytoplasm"/>
    <property type="evidence" value="ECO:0007669"/>
    <property type="project" value="UniProtKB-SubCell"/>
</dbReference>
<dbReference type="GO" id="GO:0016832">
    <property type="term" value="F:aldehyde-lyase activity"/>
    <property type="evidence" value="ECO:0007669"/>
    <property type="project" value="InterPro"/>
</dbReference>
<dbReference type="GO" id="GO:0004801">
    <property type="term" value="F:transaldolase activity"/>
    <property type="evidence" value="ECO:0007669"/>
    <property type="project" value="UniProtKB-UniRule"/>
</dbReference>
<dbReference type="GO" id="GO:0005975">
    <property type="term" value="P:carbohydrate metabolic process"/>
    <property type="evidence" value="ECO:0007669"/>
    <property type="project" value="InterPro"/>
</dbReference>
<dbReference type="GO" id="GO:0006098">
    <property type="term" value="P:pentose-phosphate shunt"/>
    <property type="evidence" value="ECO:0007669"/>
    <property type="project" value="UniProtKB-UniRule"/>
</dbReference>
<dbReference type="CDD" id="cd00956">
    <property type="entry name" value="Transaldolase_FSA"/>
    <property type="match status" value="1"/>
</dbReference>
<dbReference type="FunFam" id="3.20.20.70:FF:000018">
    <property type="entry name" value="Probable transaldolase"/>
    <property type="match status" value="1"/>
</dbReference>
<dbReference type="Gene3D" id="3.20.20.70">
    <property type="entry name" value="Aldolase class I"/>
    <property type="match status" value="1"/>
</dbReference>
<dbReference type="HAMAP" id="MF_00494">
    <property type="entry name" value="Transaldolase_3b"/>
    <property type="match status" value="1"/>
</dbReference>
<dbReference type="InterPro" id="IPR013785">
    <property type="entry name" value="Aldolase_TIM"/>
</dbReference>
<dbReference type="InterPro" id="IPR001585">
    <property type="entry name" value="TAL/FSA"/>
</dbReference>
<dbReference type="InterPro" id="IPR022999">
    <property type="entry name" value="Transaldolase_3B"/>
</dbReference>
<dbReference type="InterPro" id="IPR004731">
    <property type="entry name" value="Transaldolase_3B/F6P_aldolase"/>
</dbReference>
<dbReference type="InterPro" id="IPR018225">
    <property type="entry name" value="Transaldolase_AS"/>
</dbReference>
<dbReference type="InterPro" id="IPR033919">
    <property type="entry name" value="TSA/FSA_arc/bac"/>
</dbReference>
<dbReference type="NCBIfam" id="TIGR00875">
    <property type="entry name" value="fsa_talC_mipB"/>
    <property type="match status" value="1"/>
</dbReference>
<dbReference type="PANTHER" id="PTHR10683">
    <property type="entry name" value="TRANSALDOLASE"/>
    <property type="match status" value="1"/>
</dbReference>
<dbReference type="PANTHER" id="PTHR10683:SF36">
    <property type="entry name" value="TRANSALDOLASE"/>
    <property type="match status" value="1"/>
</dbReference>
<dbReference type="Pfam" id="PF00923">
    <property type="entry name" value="TAL_FSA"/>
    <property type="match status" value="1"/>
</dbReference>
<dbReference type="SUPFAM" id="SSF51569">
    <property type="entry name" value="Aldolase"/>
    <property type="match status" value="1"/>
</dbReference>
<dbReference type="PROSITE" id="PS01054">
    <property type="entry name" value="TRANSALDOLASE_1"/>
    <property type="match status" value="1"/>
</dbReference>
<dbReference type="PROSITE" id="PS00958">
    <property type="entry name" value="TRANSALDOLASE_2"/>
    <property type="match status" value="1"/>
</dbReference>
<protein>
    <recommendedName>
        <fullName evidence="1">Probable transaldolase</fullName>
        <ecNumber evidence="1">2.2.1.2</ecNumber>
    </recommendedName>
</protein>
<keyword id="KW-0963">Cytoplasm</keyword>
<keyword id="KW-0570">Pentose shunt</keyword>
<keyword id="KW-0704">Schiff base</keyword>
<keyword id="KW-0808">Transferase</keyword>
<gene>
    <name evidence="1" type="primary">tal</name>
    <name type="ordered locus">BCE33L0580</name>
</gene>